<reference key="1">
    <citation type="journal article" date="2003" name="Genomics">
        <title>Evolution of the cystatin B gene: implications for the origin of its variable dodecamer tandem repeat in humans.</title>
        <authorList>
            <person name="Osawa M."/>
            <person name="Kaneko M."/>
            <person name="Horiuchi H."/>
            <person name="Kitano T."/>
            <person name="Kawamoto Y."/>
            <person name="Saitou N."/>
            <person name="Umetsu K."/>
        </authorList>
    </citation>
    <scope>NUCLEOTIDE SEQUENCE [GENOMIC DNA]</scope>
</reference>
<accession>P60576</accession>
<keyword id="KW-0007">Acetylation</keyword>
<keyword id="KW-0963">Cytoplasm</keyword>
<keyword id="KW-0539">Nucleus</keyword>
<keyword id="KW-0646">Protease inhibitor</keyword>
<keyword id="KW-0789">Thiol protease inhibitor</keyword>
<proteinExistence type="inferred from homology"/>
<dbReference type="EMBL" id="AB083089">
    <property type="protein sequence ID" value="BAC20308.1"/>
    <property type="molecule type" value="Genomic_DNA"/>
</dbReference>
<dbReference type="RefSeq" id="XP_054324902.1">
    <property type="nucleotide sequence ID" value="XM_054468927.2"/>
</dbReference>
<dbReference type="BMRB" id="P60576"/>
<dbReference type="SMR" id="P60576"/>
<dbReference type="MEROPS" id="I25.003"/>
<dbReference type="GeneID" id="129022649"/>
<dbReference type="GO" id="GO:0005829">
    <property type="term" value="C:cytosol"/>
    <property type="evidence" value="ECO:0007669"/>
    <property type="project" value="TreeGrafter"/>
</dbReference>
<dbReference type="GO" id="GO:0005634">
    <property type="term" value="C:nucleus"/>
    <property type="evidence" value="ECO:0007669"/>
    <property type="project" value="UniProtKB-SubCell"/>
</dbReference>
<dbReference type="GO" id="GO:0004869">
    <property type="term" value="F:cysteine-type endopeptidase inhibitor activity"/>
    <property type="evidence" value="ECO:0007669"/>
    <property type="project" value="UniProtKB-KW"/>
</dbReference>
<dbReference type="CDD" id="cd00042">
    <property type="entry name" value="CY"/>
    <property type="match status" value="1"/>
</dbReference>
<dbReference type="FunFam" id="3.10.450.10:FF:000001">
    <property type="entry name" value="Cystatin-A"/>
    <property type="match status" value="1"/>
</dbReference>
<dbReference type="Gene3D" id="3.10.450.10">
    <property type="match status" value="1"/>
</dbReference>
<dbReference type="InterPro" id="IPR000010">
    <property type="entry name" value="Cystatin_dom"/>
</dbReference>
<dbReference type="InterPro" id="IPR046350">
    <property type="entry name" value="Cystatin_sf"/>
</dbReference>
<dbReference type="InterPro" id="IPR018073">
    <property type="entry name" value="Prot_inh_cystat_CS"/>
</dbReference>
<dbReference type="InterPro" id="IPR001713">
    <property type="entry name" value="Prot_inh_stefin"/>
</dbReference>
<dbReference type="PANTHER" id="PTHR11414">
    <property type="entry name" value="CYSTATIN FAMILY MEMBER"/>
    <property type="match status" value="1"/>
</dbReference>
<dbReference type="PANTHER" id="PTHR11414:SF22">
    <property type="entry name" value="CYSTATIN-B"/>
    <property type="match status" value="1"/>
</dbReference>
<dbReference type="Pfam" id="PF00031">
    <property type="entry name" value="Cystatin"/>
    <property type="match status" value="1"/>
</dbReference>
<dbReference type="PRINTS" id="PR00295">
    <property type="entry name" value="STEFINA"/>
</dbReference>
<dbReference type="SMART" id="SM00043">
    <property type="entry name" value="CY"/>
    <property type="match status" value="1"/>
</dbReference>
<dbReference type="SUPFAM" id="SSF54403">
    <property type="entry name" value="Cystatin/monellin"/>
    <property type="match status" value="1"/>
</dbReference>
<dbReference type="PROSITE" id="PS00287">
    <property type="entry name" value="CYSTATIN"/>
    <property type="match status" value="1"/>
</dbReference>
<comment type="function">
    <text evidence="1">This is an intracellular thiol proteinase inhibitor. Tightly binding reversible inhibitor of cathepsins L, H and B (By similarity).</text>
</comment>
<comment type="subunit">
    <text evidence="1">Able to form dimers stabilized by noncovalent forces.</text>
</comment>
<comment type="subcellular location">
    <subcellularLocation>
        <location evidence="1">Cytoplasm</location>
    </subcellularLocation>
    <subcellularLocation>
        <location evidence="1">Nucleus</location>
    </subcellularLocation>
</comment>
<comment type="similarity">
    <text evidence="3">Belongs to the cystatin family.</text>
</comment>
<organism>
    <name type="scientific">Pongo pygmaeus</name>
    <name type="common">Bornean orangutan</name>
    <dbReference type="NCBI Taxonomy" id="9600"/>
    <lineage>
        <taxon>Eukaryota</taxon>
        <taxon>Metazoa</taxon>
        <taxon>Chordata</taxon>
        <taxon>Craniata</taxon>
        <taxon>Vertebrata</taxon>
        <taxon>Euteleostomi</taxon>
        <taxon>Mammalia</taxon>
        <taxon>Eutheria</taxon>
        <taxon>Euarchontoglires</taxon>
        <taxon>Primates</taxon>
        <taxon>Haplorrhini</taxon>
        <taxon>Catarrhini</taxon>
        <taxon>Hominidae</taxon>
        <taxon>Pongo</taxon>
    </lineage>
</organism>
<evidence type="ECO:0000250" key="1"/>
<evidence type="ECO:0000250" key="2">
    <source>
        <dbReference type="UniProtKB" id="P25417"/>
    </source>
</evidence>
<evidence type="ECO:0000305" key="3"/>
<protein>
    <recommendedName>
        <fullName>Cystatin-B</fullName>
    </recommendedName>
    <alternativeName>
        <fullName>Stefin-B</fullName>
    </alternativeName>
</protein>
<feature type="chain" id="PRO_0000207140" description="Cystatin-B">
    <location>
        <begin position="1"/>
        <end position="98"/>
    </location>
</feature>
<feature type="short sequence motif" description="Secondary area of contact" evidence="1">
    <location>
        <begin position="46"/>
        <end position="50"/>
    </location>
</feature>
<feature type="site" description="Reactive site" evidence="1">
    <location>
        <position position="4"/>
    </location>
</feature>
<feature type="modified residue" description="N-acetylmethionine" evidence="2 3">
    <location>
        <position position="1"/>
    </location>
</feature>
<name>CYTB_PONPY</name>
<sequence>MMCGAPSATQPATAETQHIADQVRSQLEEKENKKFPVFKAVSFKSQVVAGTNYFIKVHVGDEDFVHLRVFQSLPHENKPLTLSNYQTNKAKHDELTYF</sequence>
<gene>
    <name type="primary">CSTB</name>
    <name type="synonym">STFB</name>
</gene>